<organism>
    <name type="scientific">Streptococcus pneumoniae serotype 4 (strain ATCC BAA-334 / TIGR4)</name>
    <dbReference type="NCBI Taxonomy" id="170187"/>
    <lineage>
        <taxon>Bacteria</taxon>
        <taxon>Bacillati</taxon>
        <taxon>Bacillota</taxon>
        <taxon>Bacilli</taxon>
        <taxon>Lactobacillales</taxon>
        <taxon>Streptococcaceae</taxon>
        <taxon>Streptococcus</taxon>
    </lineage>
</organism>
<protein>
    <recommendedName>
        <fullName evidence="1">4-hydroxy-tetrahydrodipicolinate reductase</fullName>
        <shortName evidence="1">HTPA reductase</shortName>
        <ecNumber evidence="1">1.17.1.8</ecNumber>
    </recommendedName>
</protein>
<comment type="function">
    <text evidence="1">Catalyzes the conversion of 4-hydroxy-tetrahydrodipicolinate (HTPA) to tetrahydrodipicolinate.</text>
</comment>
<comment type="catalytic activity">
    <reaction evidence="1">
        <text>(S)-2,3,4,5-tetrahydrodipicolinate + NAD(+) + H2O = (2S,4S)-4-hydroxy-2,3,4,5-tetrahydrodipicolinate + NADH + H(+)</text>
        <dbReference type="Rhea" id="RHEA:35323"/>
        <dbReference type="ChEBI" id="CHEBI:15377"/>
        <dbReference type="ChEBI" id="CHEBI:15378"/>
        <dbReference type="ChEBI" id="CHEBI:16845"/>
        <dbReference type="ChEBI" id="CHEBI:57540"/>
        <dbReference type="ChEBI" id="CHEBI:57945"/>
        <dbReference type="ChEBI" id="CHEBI:67139"/>
        <dbReference type="EC" id="1.17.1.8"/>
    </reaction>
</comment>
<comment type="catalytic activity">
    <reaction evidence="1">
        <text>(S)-2,3,4,5-tetrahydrodipicolinate + NADP(+) + H2O = (2S,4S)-4-hydroxy-2,3,4,5-tetrahydrodipicolinate + NADPH + H(+)</text>
        <dbReference type="Rhea" id="RHEA:35331"/>
        <dbReference type="ChEBI" id="CHEBI:15377"/>
        <dbReference type="ChEBI" id="CHEBI:15378"/>
        <dbReference type="ChEBI" id="CHEBI:16845"/>
        <dbReference type="ChEBI" id="CHEBI:57783"/>
        <dbReference type="ChEBI" id="CHEBI:58349"/>
        <dbReference type="ChEBI" id="CHEBI:67139"/>
        <dbReference type="EC" id="1.17.1.8"/>
    </reaction>
</comment>
<comment type="pathway">
    <text evidence="1">Amino-acid biosynthesis; L-lysine biosynthesis via DAP pathway; (S)-tetrahydrodipicolinate from L-aspartate: step 4/4.</text>
</comment>
<comment type="interaction">
    <interactant intactId="EBI-6472817">
        <id>P63895</id>
    </interactant>
    <interactant intactId="EBI-6472822">
        <id>A0A0H2UR43</id>
        <label>SP_1597</label>
    </interactant>
    <organismsDiffer>false</organismsDiffer>
    <experiments>2</experiments>
</comment>
<comment type="subcellular location">
    <subcellularLocation>
        <location evidence="1">Cytoplasm</location>
    </subcellularLocation>
</comment>
<comment type="similarity">
    <text evidence="1">Belongs to the DapB family.</text>
</comment>
<comment type="caution">
    <text evidence="2">Was originally thought to be a dihydrodipicolinate reductase (DHDPR), catalyzing the conversion of dihydrodipicolinate to tetrahydrodipicolinate. However, it was shown in E.coli that the substrate of the enzymatic reaction is not dihydrodipicolinate (DHDP) but in fact (2S,4S)-4-hydroxy-2,3,4,5-tetrahydrodipicolinic acid (HTPA), the product released by the DapA-catalyzed reaction.</text>
</comment>
<gene>
    <name evidence="1" type="primary">dapB</name>
    <name type="ordered locus">SP_1555</name>
</gene>
<accession>P63895</accession>
<accession>Q97PP8</accession>
<name>DAPB_STRPN</name>
<dbReference type="EC" id="1.17.1.8" evidence="1"/>
<dbReference type="EMBL" id="AE005672">
    <property type="protein sequence ID" value="AAK75642.1"/>
    <property type="molecule type" value="Genomic_DNA"/>
</dbReference>
<dbReference type="PIR" id="A95181">
    <property type="entry name" value="A95181"/>
</dbReference>
<dbReference type="RefSeq" id="WP_000027902.1">
    <property type="nucleotide sequence ID" value="NZ_CP155539.1"/>
</dbReference>
<dbReference type="SMR" id="P63895"/>
<dbReference type="IntAct" id="P63895">
    <property type="interactions" value="1"/>
</dbReference>
<dbReference type="PaxDb" id="170187-SP_1555"/>
<dbReference type="EnsemblBacteria" id="AAK75642">
    <property type="protein sequence ID" value="AAK75642"/>
    <property type="gene ID" value="SP_1555"/>
</dbReference>
<dbReference type="KEGG" id="spn:SP_1555"/>
<dbReference type="eggNOG" id="COG0289">
    <property type="taxonomic scope" value="Bacteria"/>
</dbReference>
<dbReference type="PhylomeDB" id="P63895"/>
<dbReference type="BioCyc" id="SPNE170187:G1FZB-1575-MONOMER"/>
<dbReference type="UniPathway" id="UPA00034">
    <property type="reaction ID" value="UER00018"/>
</dbReference>
<dbReference type="Proteomes" id="UP000000585">
    <property type="component" value="Chromosome"/>
</dbReference>
<dbReference type="GO" id="GO:0005829">
    <property type="term" value="C:cytosol"/>
    <property type="evidence" value="ECO:0007669"/>
    <property type="project" value="TreeGrafter"/>
</dbReference>
<dbReference type="GO" id="GO:0008839">
    <property type="term" value="F:4-hydroxy-tetrahydrodipicolinate reductase"/>
    <property type="evidence" value="ECO:0007669"/>
    <property type="project" value="UniProtKB-EC"/>
</dbReference>
<dbReference type="GO" id="GO:0051287">
    <property type="term" value="F:NAD binding"/>
    <property type="evidence" value="ECO:0007669"/>
    <property type="project" value="UniProtKB-UniRule"/>
</dbReference>
<dbReference type="GO" id="GO:0050661">
    <property type="term" value="F:NADP binding"/>
    <property type="evidence" value="ECO:0007669"/>
    <property type="project" value="UniProtKB-UniRule"/>
</dbReference>
<dbReference type="GO" id="GO:0016726">
    <property type="term" value="F:oxidoreductase activity, acting on CH or CH2 groups, NAD or NADP as acceptor"/>
    <property type="evidence" value="ECO:0007669"/>
    <property type="project" value="UniProtKB-UniRule"/>
</dbReference>
<dbReference type="GO" id="GO:0019877">
    <property type="term" value="P:diaminopimelate biosynthetic process"/>
    <property type="evidence" value="ECO:0007669"/>
    <property type="project" value="UniProtKB-UniRule"/>
</dbReference>
<dbReference type="GO" id="GO:0009089">
    <property type="term" value="P:lysine biosynthetic process via diaminopimelate"/>
    <property type="evidence" value="ECO:0007669"/>
    <property type="project" value="UniProtKB-UniRule"/>
</dbReference>
<dbReference type="CDD" id="cd02274">
    <property type="entry name" value="DHDPR_N"/>
    <property type="match status" value="1"/>
</dbReference>
<dbReference type="FunFam" id="3.30.360.10:FF:000009">
    <property type="entry name" value="4-hydroxy-tetrahydrodipicolinate reductase"/>
    <property type="match status" value="1"/>
</dbReference>
<dbReference type="Gene3D" id="3.30.360.10">
    <property type="entry name" value="Dihydrodipicolinate Reductase, domain 2"/>
    <property type="match status" value="1"/>
</dbReference>
<dbReference type="Gene3D" id="3.40.50.720">
    <property type="entry name" value="NAD(P)-binding Rossmann-like Domain"/>
    <property type="match status" value="1"/>
</dbReference>
<dbReference type="HAMAP" id="MF_00102">
    <property type="entry name" value="DapB"/>
    <property type="match status" value="1"/>
</dbReference>
<dbReference type="InterPro" id="IPR022663">
    <property type="entry name" value="DapB_C"/>
</dbReference>
<dbReference type="InterPro" id="IPR000846">
    <property type="entry name" value="DapB_N"/>
</dbReference>
<dbReference type="InterPro" id="IPR022664">
    <property type="entry name" value="DapB_N_CS"/>
</dbReference>
<dbReference type="InterPro" id="IPR023940">
    <property type="entry name" value="DHDPR_bac"/>
</dbReference>
<dbReference type="InterPro" id="IPR036291">
    <property type="entry name" value="NAD(P)-bd_dom_sf"/>
</dbReference>
<dbReference type="NCBIfam" id="TIGR00036">
    <property type="entry name" value="dapB"/>
    <property type="match status" value="1"/>
</dbReference>
<dbReference type="PANTHER" id="PTHR20836:SF0">
    <property type="entry name" value="4-HYDROXY-TETRAHYDRODIPICOLINATE REDUCTASE 1, CHLOROPLASTIC-RELATED"/>
    <property type="match status" value="1"/>
</dbReference>
<dbReference type="PANTHER" id="PTHR20836">
    <property type="entry name" value="DIHYDRODIPICOLINATE REDUCTASE"/>
    <property type="match status" value="1"/>
</dbReference>
<dbReference type="Pfam" id="PF05173">
    <property type="entry name" value="DapB_C"/>
    <property type="match status" value="1"/>
</dbReference>
<dbReference type="Pfam" id="PF01113">
    <property type="entry name" value="DapB_N"/>
    <property type="match status" value="1"/>
</dbReference>
<dbReference type="PIRSF" id="PIRSF000161">
    <property type="entry name" value="DHPR"/>
    <property type="match status" value="1"/>
</dbReference>
<dbReference type="SUPFAM" id="SSF55347">
    <property type="entry name" value="Glyceraldehyde-3-phosphate dehydrogenase-like, C-terminal domain"/>
    <property type="match status" value="1"/>
</dbReference>
<dbReference type="SUPFAM" id="SSF51735">
    <property type="entry name" value="NAD(P)-binding Rossmann-fold domains"/>
    <property type="match status" value="1"/>
</dbReference>
<dbReference type="PROSITE" id="PS01298">
    <property type="entry name" value="DAPB"/>
    <property type="match status" value="1"/>
</dbReference>
<keyword id="KW-0028">Amino-acid biosynthesis</keyword>
<keyword id="KW-0963">Cytoplasm</keyword>
<keyword id="KW-0220">Diaminopimelate biosynthesis</keyword>
<keyword id="KW-0457">Lysine biosynthesis</keyword>
<keyword id="KW-0520">NAD</keyword>
<keyword id="KW-0521">NADP</keyword>
<keyword id="KW-0560">Oxidoreductase</keyword>
<keyword id="KW-1185">Reference proteome</keyword>
<feature type="chain" id="PRO_0000141497" description="4-hydroxy-tetrahydrodipicolinate reductase">
    <location>
        <begin position="1"/>
        <end position="255"/>
    </location>
</feature>
<feature type="active site" description="Proton donor/acceptor" evidence="1">
    <location>
        <position position="145"/>
    </location>
</feature>
<feature type="active site" description="Proton donor" evidence="1">
    <location>
        <position position="149"/>
    </location>
</feature>
<feature type="binding site" evidence="1">
    <location>
        <begin position="9"/>
        <end position="14"/>
    </location>
    <ligand>
        <name>NAD(+)</name>
        <dbReference type="ChEBI" id="CHEBI:57540"/>
    </ligand>
</feature>
<feature type="binding site" evidence="1">
    <location>
        <position position="35"/>
    </location>
    <ligand>
        <name>NAD(+)</name>
        <dbReference type="ChEBI" id="CHEBI:57540"/>
    </ligand>
</feature>
<feature type="binding site" evidence="1">
    <location>
        <begin position="89"/>
        <end position="91"/>
    </location>
    <ligand>
        <name>NAD(+)</name>
        <dbReference type="ChEBI" id="CHEBI:57540"/>
    </ligand>
</feature>
<feature type="binding site" evidence="1">
    <location>
        <begin position="115"/>
        <end position="118"/>
    </location>
    <ligand>
        <name>NAD(+)</name>
        <dbReference type="ChEBI" id="CHEBI:57540"/>
    </ligand>
</feature>
<feature type="binding site" evidence="1">
    <location>
        <position position="146"/>
    </location>
    <ligand>
        <name>(S)-2,3,4,5-tetrahydrodipicolinate</name>
        <dbReference type="ChEBI" id="CHEBI:16845"/>
    </ligand>
</feature>
<feature type="binding site" evidence="1">
    <location>
        <begin position="155"/>
        <end position="156"/>
    </location>
    <ligand>
        <name>(S)-2,3,4,5-tetrahydrodipicolinate</name>
        <dbReference type="ChEBI" id="CHEBI:16845"/>
    </ligand>
</feature>
<sequence length="255" mass="27837">MSIRVIIAGFKGKMGQAACQMVLTDPDLDLVAVLDPFESESEWQGIPVFKDKADLAGFEADVWVDFTTPAVAYENTRFALENGFAPVVGTTGFTSEEIAELKEFSRAQDLGGLIAPNFALGAVLLMQFATQAAKYFPNVEIIELHHDKKKDAPSGTAIKTAELMAEVRESIQQGAADEEELIAGARGADFDGMRIHSVRLPGLVAHQEVIFGNQGEGLTLRHDSYDRISFMTGVNLGIKEVVKRHELVYGLEHLL</sequence>
<reference key="1">
    <citation type="journal article" date="2001" name="Science">
        <title>Complete genome sequence of a virulent isolate of Streptococcus pneumoniae.</title>
        <authorList>
            <person name="Tettelin H."/>
            <person name="Nelson K.E."/>
            <person name="Paulsen I.T."/>
            <person name="Eisen J.A."/>
            <person name="Read T.D."/>
            <person name="Peterson S.N."/>
            <person name="Heidelberg J.F."/>
            <person name="DeBoy R.T."/>
            <person name="Haft D.H."/>
            <person name="Dodson R.J."/>
            <person name="Durkin A.S."/>
            <person name="Gwinn M.L."/>
            <person name="Kolonay J.F."/>
            <person name="Nelson W.C."/>
            <person name="Peterson J.D."/>
            <person name="Umayam L.A."/>
            <person name="White O."/>
            <person name="Salzberg S.L."/>
            <person name="Lewis M.R."/>
            <person name="Radune D."/>
            <person name="Holtzapple E.K."/>
            <person name="Khouri H.M."/>
            <person name="Wolf A.M."/>
            <person name="Utterback T.R."/>
            <person name="Hansen C.L."/>
            <person name="McDonald L.A."/>
            <person name="Feldblyum T.V."/>
            <person name="Angiuoli S.V."/>
            <person name="Dickinson T."/>
            <person name="Hickey E.K."/>
            <person name="Holt I.E."/>
            <person name="Loftus B.J."/>
            <person name="Yang F."/>
            <person name="Smith H.O."/>
            <person name="Venter J.C."/>
            <person name="Dougherty B.A."/>
            <person name="Morrison D.A."/>
            <person name="Hollingshead S.K."/>
            <person name="Fraser C.M."/>
        </authorList>
    </citation>
    <scope>NUCLEOTIDE SEQUENCE [LARGE SCALE GENOMIC DNA]</scope>
    <source>
        <strain>ATCC BAA-334 / TIGR4</strain>
    </source>
</reference>
<evidence type="ECO:0000255" key="1">
    <source>
        <dbReference type="HAMAP-Rule" id="MF_00102"/>
    </source>
</evidence>
<evidence type="ECO:0000305" key="2"/>
<proteinExistence type="evidence at protein level"/>